<proteinExistence type="inferred from homology"/>
<keyword id="KW-0963">Cytoplasm</keyword>
<keyword id="KW-0539">Nucleus</keyword>
<keyword id="KW-1185">Reference proteome</keyword>
<keyword id="KW-0694">RNA-binding</keyword>
<keyword id="KW-0813">Transport</keyword>
<keyword id="KW-0819">tRNA processing</keyword>
<keyword id="KW-0820">tRNA-binding</keyword>
<protein>
    <recommendedName>
        <fullName>Exportin-T</fullName>
    </recommendedName>
    <alternativeName>
        <fullName>Exportin(tRNA)</fullName>
    </alternativeName>
    <alternativeName>
        <fullName>Karyopherin-beta</fullName>
    </alternativeName>
    <alternativeName>
        <fullName>tRNA exportin</fullName>
    </alternativeName>
</protein>
<evidence type="ECO:0000250" key="1"/>
<evidence type="ECO:0000305" key="2"/>
<organism>
    <name type="scientific">Aspergillus oryzae (strain ATCC 42149 / RIB 40)</name>
    <name type="common">Yellow koji mold</name>
    <dbReference type="NCBI Taxonomy" id="510516"/>
    <lineage>
        <taxon>Eukaryota</taxon>
        <taxon>Fungi</taxon>
        <taxon>Dikarya</taxon>
        <taxon>Ascomycota</taxon>
        <taxon>Pezizomycotina</taxon>
        <taxon>Eurotiomycetes</taxon>
        <taxon>Eurotiomycetidae</taxon>
        <taxon>Eurotiales</taxon>
        <taxon>Aspergillaceae</taxon>
        <taxon>Aspergillus</taxon>
        <taxon>Aspergillus subgen. Circumdati</taxon>
    </lineage>
</organism>
<reference key="1">
    <citation type="journal article" date="2005" name="Nature">
        <title>Genome sequencing and analysis of Aspergillus oryzae.</title>
        <authorList>
            <person name="Machida M."/>
            <person name="Asai K."/>
            <person name="Sano M."/>
            <person name="Tanaka T."/>
            <person name="Kumagai T."/>
            <person name="Terai G."/>
            <person name="Kusumoto K."/>
            <person name="Arima T."/>
            <person name="Akita O."/>
            <person name="Kashiwagi Y."/>
            <person name="Abe K."/>
            <person name="Gomi K."/>
            <person name="Horiuchi H."/>
            <person name="Kitamoto K."/>
            <person name="Kobayashi T."/>
            <person name="Takeuchi M."/>
            <person name="Denning D.W."/>
            <person name="Galagan J.E."/>
            <person name="Nierman W.C."/>
            <person name="Yu J."/>
            <person name="Archer D.B."/>
            <person name="Bennett J.W."/>
            <person name="Bhatnagar D."/>
            <person name="Cleveland T.E."/>
            <person name="Fedorova N.D."/>
            <person name="Gotoh O."/>
            <person name="Horikawa H."/>
            <person name="Hosoyama A."/>
            <person name="Ichinomiya M."/>
            <person name="Igarashi R."/>
            <person name="Iwashita K."/>
            <person name="Juvvadi P.R."/>
            <person name="Kato M."/>
            <person name="Kato Y."/>
            <person name="Kin T."/>
            <person name="Kokubun A."/>
            <person name="Maeda H."/>
            <person name="Maeyama N."/>
            <person name="Maruyama J."/>
            <person name="Nagasaki H."/>
            <person name="Nakajima T."/>
            <person name="Oda K."/>
            <person name="Okada K."/>
            <person name="Paulsen I."/>
            <person name="Sakamoto K."/>
            <person name="Sawano T."/>
            <person name="Takahashi M."/>
            <person name="Takase K."/>
            <person name="Terabayashi Y."/>
            <person name="Wortman J.R."/>
            <person name="Yamada O."/>
            <person name="Yamagata Y."/>
            <person name="Anazawa H."/>
            <person name="Hata Y."/>
            <person name="Koide Y."/>
            <person name="Komori T."/>
            <person name="Koyama Y."/>
            <person name="Minetoki T."/>
            <person name="Suharnan S."/>
            <person name="Tanaka A."/>
            <person name="Isono K."/>
            <person name="Kuhara S."/>
            <person name="Ogasawara N."/>
            <person name="Kikuchi H."/>
        </authorList>
    </citation>
    <scope>NUCLEOTIDE SEQUENCE [LARGE SCALE GENOMIC DNA]</scope>
    <source>
        <strain>ATCC 42149 / RIB 40</strain>
    </source>
</reference>
<gene>
    <name type="primary">los1</name>
    <name type="ORF">AO090020000604</name>
</gene>
<dbReference type="EMBL" id="BA000054">
    <property type="protein sequence ID" value="BAE63762.1"/>
    <property type="status" value="ALT_SEQ"/>
    <property type="molecule type" value="Genomic_DNA"/>
</dbReference>
<dbReference type="SMR" id="Q2U3V3"/>
<dbReference type="STRING" id="510516.Q2U3V3"/>
<dbReference type="EnsemblFungi" id="BAE63762">
    <property type="protein sequence ID" value="BAE63762"/>
    <property type="gene ID" value="AO090020000604"/>
</dbReference>
<dbReference type="Proteomes" id="UP000006564">
    <property type="component" value="Chromosome 6"/>
</dbReference>
<dbReference type="GO" id="GO:0005737">
    <property type="term" value="C:cytoplasm"/>
    <property type="evidence" value="ECO:0007669"/>
    <property type="project" value="UniProtKB-SubCell"/>
</dbReference>
<dbReference type="GO" id="GO:0016363">
    <property type="term" value="C:nuclear matrix"/>
    <property type="evidence" value="ECO:0007669"/>
    <property type="project" value="TreeGrafter"/>
</dbReference>
<dbReference type="GO" id="GO:0005643">
    <property type="term" value="C:nuclear pore"/>
    <property type="evidence" value="ECO:0007669"/>
    <property type="project" value="TreeGrafter"/>
</dbReference>
<dbReference type="GO" id="GO:0031267">
    <property type="term" value="F:small GTPase binding"/>
    <property type="evidence" value="ECO:0007669"/>
    <property type="project" value="InterPro"/>
</dbReference>
<dbReference type="GO" id="GO:0000049">
    <property type="term" value="F:tRNA binding"/>
    <property type="evidence" value="ECO:0007669"/>
    <property type="project" value="UniProtKB-KW"/>
</dbReference>
<dbReference type="GO" id="GO:0008033">
    <property type="term" value="P:tRNA processing"/>
    <property type="evidence" value="ECO:0007669"/>
    <property type="project" value="UniProtKB-KW"/>
</dbReference>
<dbReference type="GO" id="GO:0071528">
    <property type="term" value="P:tRNA re-export from nucleus"/>
    <property type="evidence" value="ECO:0007669"/>
    <property type="project" value="InterPro"/>
</dbReference>
<dbReference type="FunFam" id="1.25.10.10:FF:000355">
    <property type="entry name" value="Exportin-T"/>
    <property type="match status" value="1"/>
</dbReference>
<dbReference type="Gene3D" id="1.25.10.10">
    <property type="entry name" value="Leucine-rich Repeat Variant"/>
    <property type="match status" value="1"/>
</dbReference>
<dbReference type="InterPro" id="IPR011989">
    <property type="entry name" value="ARM-like"/>
</dbReference>
<dbReference type="InterPro" id="IPR016024">
    <property type="entry name" value="ARM-type_fold"/>
</dbReference>
<dbReference type="InterPro" id="IPR013598">
    <property type="entry name" value="Exportin-1/Importin-b-like"/>
</dbReference>
<dbReference type="InterPro" id="IPR045546">
    <property type="entry name" value="Exportin-T_C"/>
</dbReference>
<dbReference type="InterPro" id="IPR040017">
    <property type="entry name" value="XPOT"/>
</dbReference>
<dbReference type="PANTHER" id="PTHR15952:SF11">
    <property type="entry name" value="EXPORTIN-T"/>
    <property type="match status" value="1"/>
</dbReference>
<dbReference type="PANTHER" id="PTHR15952">
    <property type="entry name" value="EXPORTIN-T/LOS1"/>
    <property type="match status" value="1"/>
</dbReference>
<dbReference type="Pfam" id="PF19282">
    <property type="entry name" value="Exportin-T"/>
    <property type="match status" value="1"/>
</dbReference>
<dbReference type="Pfam" id="PF08389">
    <property type="entry name" value="Xpo1"/>
    <property type="match status" value="1"/>
</dbReference>
<dbReference type="SUPFAM" id="SSF48371">
    <property type="entry name" value="ARM repeat"/>
    <property type="match status" value="1"/>
</dbReference>
<accession>Q2U3V3</accession>
<name>XPOT_ASPOR</name>
<comment type="function">
    <text evidence="1">tRNA nucleus export receptor which facilitates tRNA translocation across the nuclear pore complex. Involved in pre-tRNA splicing, probably by affecting the interaction of pre-tRNA with splicing endonuclease (By similarity).</text>
</comment>
<comment type="subcellular location">
    <subcellularLocation>
        <location evidence="1">Nucleus</location>
    </subcellularLocation>
    <subcellularLocation>
        <location evidence="1">Cytoplasm</location>
    </subcellularLocation>
    <text evidence="1">Shuttles between the nucleus and the cytoplasm.</text>
</comment>
<comment type="similarity">
    <text evidence="2">Belongs to the exportin family.</text>
</comment>
<comment type="sequence caution" evidence="2">
    <conflict type="erroneous gene model prediction">
        <sequence resource="EMBL-CDS" id="BAE63762"/>
    </conflict>
</comment>
<feature type="chain" id="PRO_0000343083" description="Exportin-T">
    <location>
        <begin position="1"/>
        <end position="1026"/>
    </location>
</feature>
<sequence>MEEQVANAIEIAWNPSSDQALKAQAFDYLNQLRTDPSGWQVCLALFTKTPQHSEIIRHVALEVVNSAAQAGLIDPQALGYVRDGLMNYLRQVYGQENANPDPPNIQNKIAQTITFLFSALYGSGWESFFDDLLSLTYKGASSTSPDNMLGIVFYLRVVNSIHDEIGDVLVSRSRTEQDRANSLKDLIRMRDMQKIASSWQQILSEWRDGNDLIVEMCLKAVGSWVGWIDISLVVNQTMLDLLFQQLARAQKAELRAGEEKVRDAAVDVFTEIIGKKMKPEDKIDMIIFLNLDTIVSQLSNSPPLCENRFTFKYDTDLAETVAKLVNSTVVDIVRALEQENISAECREKANGLLQAFLPHILRYFSDEYDEVCSTVIPCGSDLLQYLRKVSKTDPSLTAQHSPILLPILKAIIAKMRYDETSSWGDEDDQTDEAEFQELRKRLAIMQQTVASVNEQLYIDAVSEVVATTFENLRQSGAQLDWRDLDLALHEMFLFGDIAVKAGSLYTKNQPNNQAAERLIEMMSRMVESDIRSFTHPATQLQYMEICVRYSSFFLYHTNLIPGVLESFLQLVHHPTKKVKTRSWYLFQRLVKQLRSHIGNVAQTVVQALGDLLVIQAEIPTEGADGDEMSSEDHEGSADAVFNSQLYLFEAVGIICSTPTVAADKQVLYVQSVLNPVFMDMEKNLAPAKSNDERALLQIHHDIMALGTLAKGFSDWMPGTSSPTSLPAPEVSEAFLQVSEATLVALESLKTSFNIRTAARFAFSRLIGVLGSRILPQLPRWIDGLLTQTSTRDEMALFLRLLDQVIFGFKGEIYAILDTLLTPFLQRVFAGIADPTTGTDDEIQLAELKREYLNFLLAVLNNDLGAVIISERNQPMFDTVITTIEHFAKDIEDFTTAKMAFSVLSKMGSSWGGPDIAPEATNGASQQVALPGFAQFMISRMSPLCWALPATPSFNPKDAQAKQVLAEAGGLQRTIYCKTGMEYIQYLRDQELPGMGMGGELIEEFLNALGQLDLKGFRQFFPVCTAR</sequence>